<protein>
    <recommendedName>
        <fullName evidence="1">tRNA dimethylallyltransferase</fullName>
        <ecNumber evidence="1">2.5.1.75</ecNumber>
    </recommendedName>
    <alternativeName>
        <fullName evidence="1">Dimethylallyl diphosphate:tRNA dimethylallyltransferase</fullName>
        <shortName evidence="1">DMAPP:tRNA dimethylallyltransferase</shortName>
        <shortName evidence="1">DMATase</shortName>
    </alternativeName>
    <alternativeName>
        <fullName evidence="1">Isopentenyl-diphosphate:tRNA isopentenyltransferase</fullName>
        <shortName evidence="1">IPP transferase</shortName>
        <shortName evidence="1">IPPT</shortName>
        <shortName evidence="1">IPTase</shortName>
    </alternativeName>
</protein>
<name>MIAA_CHLT2</name>
<evidence type="ECO:0000255" key="1">
    <source>
        <dbReference type="HAMAP-Rule" id="MF_00185"/>
    </source>
</evidence>
<dbReference type="EC" id="2.5.1.75" evidence="1"/>
<dbReference type="EMBL" id="AM884176">
    <property type="protein sequence ID" value="CAP03579.1"/>
    <property type="molecule type" value="Genomic_DNA"/>
</dbReference>
<dbReference type="RefSeq" id="WP_009872913.1">
    <property type="nucleotide sequence ID" value="NC_010287.1"/>
</dbReference>
<dbReference type="RefSeq" id="YP_001654226.1">
    <property type="nucleotide sequence ID" value="NC_010287.1"/>
</dbReference>
<dbReference type="SMR" id="B0B8Z2"/>
<dbReference type="KEGG" id="ctb:CTL0135"/>
<dbReference type="PATRIC" id="fig|471472.4.peg.146"/>
<dbReference type="HOGENOM" id="CLU_032616_0_2_0"/>
<dbReference type="Proteomes" id="UP001154402">
    <property type="component" value="Chromosome"/>
</dbReference>
<dbReference type="GO" id="GO:0005524">
    <property type="term" value="F:ATP binding"/>
    <property type="evidence" value="ECO:0007669"/>
    <property type="project" value="UniProtKB-UniRule"/>
</dbReference>
<dbReference type="GO" id="GO:0052381">
    <property type="term" value="F:tRNA dimethylallyltransferase activity"/>
    <property type="evidence" value="ECO:0007669"/>
    <property type="project" value="UniProtKB-UniRule"/>
</dbReference>
<dbReference type="GO" id="GO:0006400">
    <property type="term" value="P:tRNA modification"/>
    <property type="evidence" value="ECO:0007669"/>
    <property type="project" value="TreeGrafter"/>
</dbReference>
<dbReference type="Gene3D" id="1.10.20.140">
    <property type="match status" value="1"/>
</dbReference>
<dbReference type="Gene3D" id="3.40.50.300">
    <property type="entry name" value="P-loop containing nucleotide triphosphate hydrolases"/>
    <property type="match status" value="1"/>
</dbReference>
<dbReference type="HAMAP" id="MF_00185">
    <property type="entry name" value="IPP_trans"/>
    <property type="match status" value="1"/>
</dbReference>
<dbReference type="InterPro" id="IPR039657">
    <property type="entry name" value="Dimethylallyltransferase"/>
</dbReference>
<dbReference type="InterPro" id="IPR018022">
    <property type="entry name" value="IPT"/>
</dbReference>
<dbReference type="InterPro" id="IPR027417">
    <property type="entry name" value="P-loop_NTPase"/>
</dbReference>
<dbReference type="NCBIfam" id="TIGR00174">
    <property type="entry name" value="miaA"/>
    <property type="match status" value="1"/>
</dbReference>
<dbReference type="PANTHER" id="PTHR11088">
    <property type="entry name" value="TRNA DIMETHYLALLYLTRANSFERASE"/>
    <property type="match status" value="1"/>
</dbReference>
<dbReference type="PANTHER" id="PTHR11088:SF60">
    <property type="entry name" value="TRNA DIMETHYLALLYLTRANSFERASE"/>
    <property type="match status" value="1"/>
</dbReference>
<dbReference type="Pfam" id="PF01715">
    <property type="entry name" value="IPPT"/>
    <property type="match status" value="1"/>
</dbReference>
<dbReference type="SUPFAM" id="SSF52540">
    <property type="entry name" value="P-loop containing nucleoside triphosphate hydrolases"/>
    <property type="match status" value="2"/>
</dbReference>
<gene>
    <name evidence="1" type="primary">miaA</name>
    <name type="ordered locus">CTL0135</name>
</gene>
<sequence>MSSSSSSGAATGFAVCSDPQKSFSKMFKRTVILLAGPTGSGKTAVSLKLAPLVDGEIISVDSMQVYQGMDIGTAKVSLADRKEVPHHLIDVCHVQESFNAVDFYYHAVQACQDILSRNKVPILVGGTGFYFHTFLSGPPSGPSPDFVLREQLTLEAQERGISALYQELELLDPVYAATITKHDKNKIIRALEIIRKTGSKVSSYAWQSTVNESKEYHCRGWLLSPDPELLRHNILERCDQMLEEGLLDEVQALLAAGIKGNSSASRAIGYREWIEFLDLGSPPDLFEITKQKFITNTWRYTKKQRTWFKRYSLFRELRPMGMTLDDMAKKIAQDYFLCG</sequence>
<organism>
    <name type="scientific">Chlamydia trachomatis serovar L2 (strain ATCC VR-902B / DSM 19102 / 434/Bu)</name>
    <dbReference type="NCBI Taxonomy" id="471472"/>
    <lineage>
        <taxon>Bacteria</taxon>
        <taxon>Pseudomonadati</taxon>
        <taxon>Chlamydiota</taxon>
        <taxon>Chlamydiia</taxon>
        <taxon>Chlamydiales</taxon>
        <taxon>Chlamydiaceae</taxon>
        <taxon>Chlamydia/Chlamydophila group</taxon>
        <taxon>Chlamydia</taxon>
    </lineage>
</organism>
<feature type="chain" id="PRO_0000377112" description="tRNA dimethylallyltransferase">
    <location>
        <begin position="1"/>
        <end position="339"/>
    </location>
</feature>
<feature type="region of interest" description="Interaction with substrate tRNA" evidence="1">
    <location>
        <begin position="61"/>
        <end position="64"/>
    </location>
</feature>
<feature type="binding site" evidence="1">
    <location>
        <begin position="36"/>
        <end position="43"/>
    </location>
    <ligand>
        <name>ATP</name>
        <dbReference type="ChEBI" id="CHEBI:30616"/>
    </ligand>
</feature>
<feature type="binding site" evidence="1">
    <location>
        <begin position="38"/>
        <end position="43"/>
    </location>
    <ligand>
        <name>substrate</name>
    </ligand>
</feature>
<feature type="site" description="Interaction with substrate tRNA" evidence="1">
    <location>
        <position position="127"/>
    </location>
</feature>
<feature type="site" description="Interaction with substrate tRNA" evidence="1">
    <location>
        <position position="149"/>
    </location>
</feature>
<proteinExistence type="inferred from homology"/>
<keyword id="KW-0067">ATP-binding</keyword>
<keyword id="KW-0460">Magnesium</keyword>
<keyword id="KW-0547">Nucleotide-binding</keyword>
<keyword id="KW-0808">Transferase</keyword>
<keyword id="KW-0819">tRNA processing</keyword>
<reference key="1">
    <citation type="journal article" date="2008" name="Genome Res.">
        <title>Chlamydia trachomatis: genome sequence analysis of lymphogranuloma venereum isolates.</title>
        <authorList>
            <person name="Thomson N.R."/>
            <person name="Holden M.T.G."/>
            <person name="Carder C."/>
            <person name="Lennard N."/>
            <person name="Lockey S.J."/>
            <person name="Marsh P."/>
            <person name="Skipp P."/>
            <person name="O'Connor C.D."/>
            <person name="Goodhead I."/>
            <person name="Norbertzcak H."/>
            <person name="Harris B."/>
            <person name="Ormond D."/>
            <person name="Rance R."/>
            <person name="Quail M.A."/>
            <person name="Parkhill J."/>
            <person name="Stephens R.S."/>
            <person name="Clarke I.N."/>
        </authorList>
    </citation>
    <scope>NUCLEOTIDE SEQUENCE [LARGE SCALE GENOMIC DNA]</scope>
    <source>
        <strain>ATCC VR-902B / DSM 19102 / 434/Bu</strain>
    </source>
</reference>
<comment type="function">
    <text evidence="1">Catalyzes the transfer of a dimethylallyl group onto the adenine at position 37 in tRNAs that read codons beginning with uridine, leading to the formation of N6-(dimethylallyl)adenosine (i(6)A).</text>
</comment>
<comment type="catalytic activity">
    <reaction evidence="1">
        <text>adenosine(37) in tRNA + dimethylallyl diphosphate = N(6)-dimethylallyladenosine(37) in tRNA + diphosphate</text>
        <dbReference type="Rhea" id="RHEA:26482"/>
        <dbReference type="Rhea" id="RHEA-COMP:10162"/>
        <dbReference type="Rhea" id="RHEA-COMP:10375"/>
        <dbReference type="ChEBI" id="CHEBI:33019"/>
        <dbReference type="ChEBI" id="CHEBI:57623"/>
        <dbReference type="ChEBI" id="CHEBI:74411"/>
        <dbReference type="ChEBI" id="CHEBI:74415"/>
        <dbReference type="EC" id="2.5.1.75"/>
    </reaction>
</comment>
<comment type="cofactor">
    <cofactor evidence="1">
        <name>Mg(2+)</name>
        <dbReference type="ChEBI" id="CHEBI:18420"/>
    </cofactor>
</comment>
<comment type="subunit">
    <text evidence="1">Monomer.</text>
</comment>
<comment type="similarity">
    <text evidence="1">Belongs to the IPP transferase family.</text>
</comment>
<accession>B0B8Z2</accession>